<keyword id="KW-1003">Cell membrane</keyword>
<keyword id="KW-0407">Ion channel</keyword>
<keyword id="KW-0406">Ion transport</keyword>
<keyword id="KW-1017">Isopeptide bond</keyword>
<keyword id="KW-0449">Lipoprotein</keyword>
<keyword id="KW-0472">Membrane</keyword>
<keyword id="KW-0564">Palmitate</keyword>
<keyword id="KW-0630">Potassium</keyword>
<keyword id="KW-0631">Potassium channel</keyword>
<keyword id="KW-0633">Potassium transport</keyword>
<keyword id="KW-1185">Reference proteome</keyword>
<keyword id="KW-0812">Transmembrane</keyword>
<keyword id="KW-1133">Transmembrane helix</keyword>
<keyword id="KW-0813">Transport</keyword>
<keyword id="KW-0832">Ubl conjugation</keyword>
<keyword id="KW-0851">Voltage-gated channel</keyword>
<proteinExistence type="evidence at transcript level"/>
<dbReference type="EMBL" id="D45025">
    <property type="protein sequence ID" value="BAA08082.1"/>
    <property type="molecule type" value="mRNA"/>
</dbReference>
<dbReference type="EMBL" id="AF056943">
    <property type="protein sequence ID" value="AAC13312.1"/>
    <property type="molecule type" value="mRNA"/>
</dbReference>
<dbReference type="EMBL" id="AF149787">
    <property type="protein sequence ID" value="AAD56772.1"/>
    <property type="molecule type" value="mRNA"/>
</dbReference>
<dbReference type="PIR" id="S66669">
    <property type="entry name" value="S66669"/>
</dbReference>
<dbReference type="RefSeq" id="NP_001075505.1">
    <property type="nucleotide sequence ID" value="NM_001082036.1"/>
</dbReference>
<dbReference type="SMR" id="P50638"/>
<dbReference type="FunCoup" id="P50638">
    <property type="interactions" value="23"/>
</dbReference>
<dbReference type="STRING" id="9986.ENSOCUP00000017544"/>
<dbReference type="PaxDb" id="9986-ENSOCUP00000017544"/>
<dbReference type="Ensembl" id="ENSOCUT00000000674.2">
    <property type="protein sequence ID" value="ENSOCUP00000017544.1"/>
    <property type="gene ID" value="ENSOCUG00000000674.2"/>
</dbReference>
<dbReference type="GeneID" id="100008684"/>
<dbReference type="KEGG" id="ocu:100008684"/>
<dbReference type="CTD" id="3741"/>
<dbReference type="eggNOG" id="KOG1545">
    <property type="taxonomic scope" value="Eukaryota"/>
</dbReference>
<dbReference type="GeneTree" id="ENSGT00940000161860"/>
<dbReference type="HOGENOM" id="CLU_011722_4_0_1"/>
<dbReference type="InParanoid" id="P50638"/>
<dbReference type="OMA" id="PWKINDM"/>
<dbReference type="OrthoDB" id="415460at2759"/>
<dbReference type="TreeFam" id="TF313103"/>
<dbReference type="Proteomes" id="UP000001811">
    <property type="component" value="Chromosome 8"/>
</dbReference>
<dbReference type="Bgee" id="ENSOCUG00000000674">
    <property type="expression patterns" value="Expressed in aorta and 16 other cell types or tissues"/>
</dbReference>
<dbReference type="GO" id="GO:0009986">
    <property type="term" value="C:cell surface"/>
    <property type="evidence" value="ECO:0007669"/>
    <property type="project" value="Ensembl"/>
</dbReference>
<dbReference type="GO" id="GO:0014704">
    <property type="term" value="C:intercalated disc"/>
    <property type="evidence" value="ECO:0007669"/>
    <property type="project" value="Ensembl"/>
</dbReference>
<dbReference type="GO" id="GO:0045121">
    <property type="term" value="C:membrane raft"/>
    <property type="evidence" value="ECO:0007669"/>
    <property type="project" value="Ensembl"/>
</dbReference>
<dbReference type="GO" id="GO:0005886">
    <property type="term" value="C:plasma membrane"/>
    <property type="evidence" value="ECO:0000250"/>
    <property type="project" value="UniProtKB"/>
</dbReference>
<dbReference type="GO" id="GO:0034705">
    <property type="term" value="C:potassium channel complex"/>
    <property type="evidence" value="ECO:0000250"/>
    <property type="project" value="UniProtKB"/>
</dbReference>
<dbReference type="GO" id="GO:0008076">
    <property type="term" value="C:voltage-gated potassium channel complex"/>
    <property type="evidence" value="ECO:0000250"/>
    <property type="project" value="UniProtKB"/>
</dbReference>
<dbReference type="GO" id="GO:0051393">
    <property type="term" value="F:alpha-actinin binding"/>
    <property type="evidence" value="ECO:0007669"/>
    <property type="project" value="Ensembl"/>
</dbReference>
<dbReference type="GO" id="GO:0005251">
    <property type="term" value="F:delayed rectifier potassium channel activity"/>
    <property type="evidence" value="ECO:0000250"/>
    <property type="project" value="UniProtKB"/>
</dbReference>
<dbReference type="GO" id="GO:0015271">
    <property type="term" value="F:outward rectifier potassium channel activity"/>
    <property type="evidence" value="ECO:0007669"/>
    <property type="project" value="Ensembl"/>
</dbReference>
<dbReference type="GO" id="GO:0019901">
    <property type="term" value="F:protein kinase binding"/>
    <property type="evidence" value="ECO:0007669"/>
    <property type="project" value="Ensembl"/>
</dbReference>
<dbReference type="GO" id="GO:0097110">
    <property type="term" value="F:scaffold protein binding"/>
    <property type="evidence" value="ECO:0007669"/>
    <property type="project" value="Ensembl"/>
</dbReference>
<dbReference type="GO" id="GO:0005249">
    <property type="term" value="F:voltage-gated potassium channel activity"/>
    <property type="evidence" value="ECO:0000314"/>
    <property type="project" value="UniProtKB"/>
</dbReference>
<dbReference type="GO" id="GO:0086089">
    <property type="term" value="F:voltage-gated potassium channel activity involved in atrial cardiac muscle cell action potential repolarization"/>
    <property type="evidence" value="ECO:0007669"/>
    <property type="project" value="Ensembl"/>
</dbReference>
<dbReference type="GO" id="GO:0086087">
    <property type="term" value="F:voltage-gated potassium channel activity involved in bundle of His cell action potential repolarization"/>
    <property type="evidence" value="ECO:0007669"/>
    <property type="project" value="Ensembl"/>
</dbReference>
<dbReference type="GO" id="GO:0086090">
    <property type="term" value="F:voltage-gated potassium channel activity involved in SA node cell action potential repolarization"/>
    <property type="evidence" value="ECO:0007669"/>
    <property type="project" value="Ensembl"/>
</dbReference>
<dbReference type="GO" id="GO:0060081">
    <property type="term" value="P:membrane hyperpolarization"/>
    <property type="evidence" value="ECO:0007669"/>
    <property type="project" value="Ensembl"/>
</dbReference>
<dbReference type="GO" id="GO:0098914">
    <property type="term" value="P:membrane repolarization during atrial cardiac muscle cell action potential"/>
    <property type="evidence" value="ECO:0007669"/>
    <property type="project" value="Ensembl"/>
</dbReference>
<dbReference type="GO" id="GO:0007219">
    <property type="term" value="P:Notch signaling pathway"/>
    <property type="evidence" value="ECO:0007669"/>
    <property type="project" value="Ensembl"/>
</dbReference>
<dbReference type="GO" id="GO:0097623">
    <property type="term" value="P:potassium ion export across plasma membrane"/>
    <property type="evidence" value="ECO:0007669"/>
    <property type="project" value="Ensembl"/>
</dbReference>
<dbReference type="GO" id="GO:0071805">
    <property type="term" value="P:potassium ion transmembrane transport"/>
    <property type="evidence" value="ECO:0000250"/>
    <property type="project" value="UniProtKB"/>
</dbReference>
<dbReference type="GO" id="GO:0051260">
    <property type="term" value="P:protein homooligomerization"/>
    <property type="evidence" value="ECO:0007669"/>
    <property type="project" value="InterPro"/>
</dbReference>
<dbReference type="GO" id="GO:0060372">
    <property type="term" value="P:regulation of atrial cardiac muscle cell membrane repolarization"/>
    <property type="evidence" value="ECO:0007669"/>
    <property type="project" value="Ensembl"/>
</dbReference>
<dbReference type="GO" id="GO:0086091">
    <property type="term" value="P:regulation of heart rate by cardiac conduction"/>
    <property type="evidence" value="ECO:0007669"/>
    <property type="project" value="Ensembl"/>
</dbReference>
<dbReference type="GO" id="GO:0043266">
    <property type="term" value="P:regulation of potassium ion transport"/>
    <property type="evidence" value="ECO:0007669"/>
    <property type="project" value="Ensembl"/>
</dbReference>
<dbReference type="GO" id="GO:0019229">
    <property type="term" value="P:regulation of vasoconstriction"/>
    <property type="evidence" value="ECO:0007669"/>
    <property type="project" value="Ensembl"/>
</dbReference>
<dbReference type="FunFam" id="1.10.287.70:FF:000002">
    <property type="entry name" value="Potassium voltage-gated channel subfamily a member"/>
    <property type="match status" value="1"/>
</dbReference>
<dbReference type="FunFam" id="3.30.710.10:FF:000012">
    <property type="entry name" value="Potassium voltage-gated channel subfamily A member 10"/>
    <property type="match status" value="1"/>
</dbReference>
<dbReference type="FunFam" id="1.20.120.350:FF:000025">
    <property type="entry name" value="Potassium voltage-gated channel subfamily A member 2"/>
    <property type="match status" value="1"/>
</dbReference>
<dbReference type="Gene3D" id="1.10.287.70">
    <property type="match status" value="1"/>
</dbReference>
<dbReference type="Gene3D" id="3.30.710.10">
    <property type="entry name" value="Potassium Channel Kv1.1, Chain A"/>
    <property type="match status" value="1"/>
</dbReference>
<dbReference type="Gene3D" id="1.20.120.350">
    <property type="entry name" value="Voltage-gated potassium channels. Chain C"/>
    <property type="match status" value="1"/>
</dbReference>
<dbReference type="InterPro" id="IPR000210">
    <property type="entry name" value="BTB/POZ_dom"/>
</dbReference>
<dbReference type="InterPro" id="IPR005821">
    <property type="entry name" value="Ion_trans_dom"/>
</dbReference>
<dbReference type="InterPro" id="IPR003968">
    <property type="entry name" value="K_chnl_volt-dep_Kv"/>
</dbReference>
<dbReference type="InterPro" id="IPR003972">
    <property type="entry name" value="K_chnl_volt-dep_Kv1"/>
</dbReference>
<dbReference type="InterPro" id="IPR004052">
    <property type="entry name" value="K_chnl_volt-dep_Kv1.5"/>
</dbReference>
<dbReference type="InterPro" id="IPR011333">
    <property type="entry name" value="SKP1/BTB/POZ_sf"/>
</dbReference>
<dbReference type="InterPro" id="IPR003131">
    <property type="entry name" value="T1-type_BTB"/>
</dbReference>
<dbReference type="InterPro" id="IPR028325">
    <property type="entry name" value="VG_K_chnl"/>
</dbReference>
<dbReference type="InterPro" id="IPR027359">
    <property type="entry name" value="Volt_channel_dom_sf"/>
</dbReference>
<dbReference type="PANTHER" id="PTHR11537:SF250">
    <property type="entry name" value="POTASSIUM VOLTAGE-GATED CHANNEL SUBFAMILY A MEMBER 5"/>
    <property type="match status" value="1"/>
</dbReference>
<dbReference type="PANTHER" id="PTHR11537">
    <property type="entry name" value="VOLTAGE-GATED POTASSIUM CHANNEL"/>
    <property type="match status" value="1"/>
</dbReference>
<dbReference type="Pfam" id="PF02214">
    <property type="entry name" value="BTB_2"/>
    <property type="match status" value="1"/>
</dbReference>
<dbReference type="Pfam" id="PF00520">
    <property type="entry name" value="Ion_trans"/>
    <property type="match status" value="1"/>
</dbReference>
<dbReference type="PRINTS" id="PR00169">
    <property type="entry name" value="KCHANNEL"/>
</dbReference>
<dbReference type="PRINTS" id="PR01512">
    <property type="entry name" value="KV15CHANNEL"/>
</dbReference>
<dbReference type="PRINTS" id="PR01491">
    <property type="entry name" value="KVCHANNEL"/>
</dbReference>
<dbReference type="PRINTS" id="PR01496">
    <property type="entry name" value="SHAKERCHANEL"/>
</dbReference>
<dbReference type="SMART" id="SM00225">
    <property type="entry name" value="BTB"/>
    <property type="match status" value="1"/>
</dbReference>
<dbReference type="SUPFAM" id="SSF54695">
    <property type="entry name" value="POZ domain"/>
    <property type="match status" value="1"/>
</dbReference>
<dbReference type="SUPFAM" id="SSF81324">
    <property type="entry name" value="Voltage-gated potassium channels"/>
    <property type="match status" value="1"/>
</dbReference>
<evidence type="ECO:0000250" key="1"/>
<evidence type="ECO:0000250" key="2">
    <source>
        <dbReference type="UniProtKB" id="P19024"/>
    </source>
</evidence>
<evidence type="ECO:0000250" key="3">
    <source>
        <dbReference type="UniProtKB" id="P22460"/>
    </source>
</evidence>
<evidence type="ECO:0000250" key="4">
    <source>
        <dbReference type="UniProtKB" id="P63142"/>
    </source>
</evidence>
<evidence type="ECO:0000250" key="5">
    <source>
        <dbReference type="UniProtKB" id="Q61762"/>
    </source>
</evidence>
<evidence type="ECO:0000255" key="6"/>
<evidence type="ECO:0000256" key="7">
    <source>
        <dbReference type="SAM" id="MobiDB-lite"/>
    </source>
</evidence>
<evidence type="ECO:0000269" key="8">
    <source>
    </source>
</evidence>
<evidence type="ECO:0000305" key="9"/>
<accession>P50638</accession>
<protein>
    <recommendedName>
        <fullName>Potassium voltage-gated channel subfamily A member 5</fullName>
    </recommendedName>
    <alternativeName>
        <fullName>Voltage-gated potassium channel subunit Kv1.5</fullName>
    </alternativeName>
</protein>
<comment type="function">
    <text evidence="2 3 5 8">Voltage-gated potassium channel that mediates transmembrane potassium transport in excitable membranes. Forms tetrameric potassium-selective channels through which potassium ions pass in accordance with their electrochemical gradient. The channel alternates between opened and closed conformations in response to the voltage difference across the membrane (PubMed:7556635). Can form functional homotetrameric channels and heterotetrameric channels that contain variable proportions of KCNA1, KCNA2, KCNA4, KCNA5, and possibly other family members as well; channel properties depend on the type of alpha subunits that are part of the channel (By similarity). Channel properties are modulated by cytoplasmic beta subunits that regulate the subcellular location of the alpha subunits and promote rapid inactivation (PubMed:7556635). Homotetrameric channels display rapid activation and slow inactivation (PubMed:7556635). Required for normal electrical conduction including formation of the infranodal ventricular conduction system and normal action potential configuration, as a result of its interaction with XIRP2 (By similarity). May play a role in regulating the secretion of insulin in normal pancreatic islets (By similarity).</text>
</comment>
<comment type="catalytic activity">
    <reaction evidence="8">
        <text>K(+)(in) = K(+)(out)</text>
        <dbReference type="Rhea" id="RHEA:29463"/>
        <dbReference type="ChEBI" id="CHEBI:29103"/>
    </reaction>
</comment>
<comment type="subunit">
    <text evidence="2 3 5">Homotetramer and heterotetramer of potassium channel proteins. Interacts with DLG1, which enhances channel currents. Forms a ternary complex with DLG1 and CAV3 (By similarity). Interacts with KCNAB1 (By similarity). Interacts with UBE2I (By similarity). Interacts with XIRP2; the interaction is required for normal action potential configuration in the heart (By similarity).</text>
</comment>
<comment type="subcellular location">
    <subcellularLocation>
        <location evidence="8">Cell membrane</location>
        <topology evidence="9">Multi-pass membrane protein</topology>
    </subcellularLocation>
</comment>
<comment type="domain">
    <text evidence="4">The transmembrane segment S4 functions as a voltage-sensor and is characterized by a series of positively charged amino acids at every third position. Channel opening and closing is effected by a conformation change that affects the position and orientation of the voltage-sensor paddle formed by S3 and S4 within the membrane. A transmembrane electric field that is positive inside would push the positively charged S4 segment outwards, thereby opening the pore, while a field that is negative inside would pull the S4 segment inwards and close the pore. Changes in the position and orientation of S4 are then transmitted to the activation gate formed by the inner helix bundle via the S4-S5 linker region.</text>
</comment>
<comment type="domain">
    <text evidence="1">The amino terminus may be important in determining the rate of inactivation of the channel while the C-terminal PDZ-binding motif may play a role in modulation of channel activity and/or targeting of the channel to specific subcellular compartments. Interacts with UBE2I.</text>
</comment>
<comment type="PTM">
    <text evidence="3">Glycosylated.</text>
</comment>
<comment type="PTM">
    <text evidence="3">Sumoylated on Lys-205, and Lys-521, preferentially with SUMO3. Sumoylation regulates the voltage sensitivity of the channel (By similarity).</text>
</comment>
<comment type="similarity">
    <text evidence="9">Belongs to the potassium channel family. A (Shaker) (TC 1.A.1.2) subfamily. Kv1.5/KCNA5 sub-subfamily.</text>
</comment>
<gene>
    <name type="primary">KCNA5</name>
</gene>
<organism>
    <name type="scientific">Oryctolagus cuniculus</name>
    <name type="common">Rabbit</name>
    <dbReference type="NCBI Taxonomy" id="9986"/>
    <lineage>
        <taxon>Eukaryota</taxon>
        <taxon>Metazoa</taxon>
        <taxon>Chordata</taxon>
        <taxon>Craniata</taxon>
        <taxon>Vertebrata</taxon>
        <taxon>Euteleostomi</taxon>
        <taxon>Mammalia</taxon>
        <taxon>Eutheria</taxon>
        <taxon>Euarchontoglires</taxon>
        <taxon>Glires</taxon>
        <taxon>Lagomorpha</taxon>
        <taxon>Leporidae</taxon>
        <taxon>Oryctolagus</taxon>
    </lineage>
</organism>
<feature type="chain" id="PRO_0000053988" description="Potassium voltage-gated channel subfamily A member 5">
    <location>
        <begin position="1"/>
        <end position="598"/>
    </location>
</feature>
<feature type="topological domain" description="Cytoplasmic" evidence="4">
    <location>
        <begin position="1"/>
        <end position="231"/>
    </location>
</feature>
<feature type="transmembrane region" description="Helical; Name=Segment S1" evidence="4">
    <location>
        <begin position="232"/>
        <end position="253"/>
    </location>
</feature>
<feature type="topological domain" description="Extracellular" evidence="4">
    <location>
        <begin position="254"/>
        <end position="308"/>
    </location>
</feature>
<feature type="transmembrane region" description="Helical; Name=Segment S2" evidence="4">
    <location>
        <begin position="309"/>
        <end position="330"/>
    </location>
</feature>
<feature type="topological domain" description="Cytoplasmic" evidence="4">
    <location>
        <begin position="331"/>
        <end position="341"/>
    </location>
</feature>
<feature type="transmembrane region" description="Helical; Name=Segment S3" evidence="4">
    <location>
        <begin position="342"/>
        <end position="362"/>
    </location>
</feature>
<feature type="topological domain" description="Extracellular" evidence="4">
    <location>
        <begin position="363"/>
        <end position="380"/>
    </location>
</feature>
<feature type="transmembrane region" description="Helical; Voltage-sensor; Name=Segment S4" evidence="4">
    <location>
        <begin position="381"/>
        <end position="401"/>
    </location>
</feature>
<feature type="topological domain" description="Cytoplasmic" evidence="4">
    <location>
        <begin position="402"/>
        <end position="416"/>
    </location>
</feature>
<feature type="transmembrane region" description="Helical; Name=Segment S5" evidence="4">
    <location>
        <begin position="417"/>
        <end position="438"/>
    </location>
</feature>
<feature type="topological domain" description="Extracellular" evidence="4">
    <location>
        <begin position="439"/>
        <end position="452"/>
    </location>
</feature>
<feature type="intramembrane region" description="Helical; Name=Pore helix" evidence="4">
    <location>
        <begin position="453"/>
        <end position="464"/>
    </location>
</feature>
<feature type="intramembrane region" evidence="4">
    <location>
        <begin position="465"/>
        <end position="472"/>
    </location>
</feature>
<feature type="transmembrane region" description="Helical; Name=Segment S6" evidence="4">
    <location>
        <begin position="480"/>
        <end position="508"/>
    </location>
</feature>
<feature type="topological domain" description="Cytoplasmic" evidence="4">
    <location>
        <begin position="509"/>
        <end position="598"/>
    </location>
</feature>
<feature type="region of interest" description="Tetramerization domain" evidence="3">
    <location>
        <begin position="1"/>
        <end position="195"/>
    </location>
</feature>
<feature type="region of interest" description="Disordered" evidence="7">
    <location>
        <begin position="1"/>
        <end position="89"/>
    </location>
</feature>
<feature type="region of interest" description="S4-S5 linker" evidence="4">
    <location>
        <begin position="403"/>
        <end position="416"/>
    </location>
</feature>
<feature type="region of interest" description="Disordered" evidence="7">
    <location>
        <begin position="517"/>
        <end position="539"/>
    </location>
</feature>
<feature type="short sequence motif" description="Selectivity filter" evidence="4">
    <location>
        <begin position="465"/>
        <end position="470"/>
    </location>
</feature>
<feature type="short sequence motif" description="PDZ-binding">
    <location>
        <begin position="596"/>
        <end position="598"/>
    </location>
</feature>
<feature type="compositionally biased region" description="Pro residues" evidence="7">
    <location>
        <begin position="60"/>
        <end position="69"/>
    </location>
</feature>
<feature type="lipid moiety-binding region" description="S-palmitoyl cysteine" evidence="6">
    <location>
        <position position="331"/>
    </location>
</feature>
<feature type="cross-link" description="Glycyl lysine isopeptide (Lys-Gly) (interchain with G-Cter in SUMO)" evidence="3">
    <location>
        <position position="205"/>
    </location>
</feature>
<feature type="cross-link" description="Glycyl lysine isopeptide (Lys-Gly) (interchain with G-Cter in SUMO)" evidence="3">
    <location>
        <position position="521"/>
    </location>
</feature>
<sequence length="598" mass="65476">MEIALGPLENGGAMTIRGGGEETAGCSQAAPTAGLGDGSQEPAPRGRGCSARRGAEPGERPLPPQPPELPQSRRSPLEEEEGEGDPGLSVAEEQTLGAGALHHQRVLINISGLRFETQLGTLAQFPNTLLGDPAKRLRYFDPLRNEYFFDRNRPSFDGILYYYQSGGRLRRPVNVSLDVFADEIRFYQLGDEAMERFREDEGFIKDEEKPLPRNEFQRQVWLIFEYPESSGSARAIAIVSVLVILISIITFCLETLPEFKDERELLRHPPVPHQPPAAPALGANGSGAVAPASGSTVAPLLPRTLADPFFIVETTCVIWFTFELLVRFFACPSKAEFSRNIMNIIDIVAIFPYFITLGTELAEQQPGGGGGGQNGQQAMSLAILRVIRLVRVFRIFKLSRHSKGLQILGKTLQASMRELGLLIFFLFIGVILFSSAVYFAEADNQGTHFSSIPDAFWWAVVTMTTVGYGDMRPITVGGKIVGSLCAIAGVLTIALPVPVIVSNFNYFYHRETDHEEQAALKEEPGSQSRGTSLDAGGQRKASWSKASLCKAGGSLETADSVRRGSCLLEKYNLKAKSNVDLRRSLYALCLDTSRETDL</sequence>
<name>KCNA5_RABIT</name>
<reference key="1">
    <citation type="journal article" date="1995" name="FEBS Lett.">
        <title>The voltage-dependent K+ channel (Kv1.5) cloned from rabbit heart and facilitation of inactivation of the delayed rectifier current by the rat beta subunit.</title>
        <authorList>
            <person name="Sasaki Y."/>
            <person name="Ishii K."/>
            <person name="Nunoki K."/>
            <person name="Yamagishi T."/>
            <person name="Taira N."/>
        </authorList>
    </citation>
    <scope>NUCLEOTIDE SEQUENCE [MRNA]</scope>
    <scope>FUNCTION</scope>
    <scope>SUBCELLULAR LOCATION</scope>
    <scope>TRANSPORTER ACTIVITY</scope>
    <source>
        <strain>Japanese white</strain>
        <tissue>Heart</tissue>
    </source>
</reference>
<reference key="2">
    <citation type="submission" date="1998-04" db="EMBL/GenBank/DDBJ databases">
        <title>Rabbit portal vein Kv1.5.</title>
        <authorList>
            <person name="Clement-Chomienne O."/>
            <person name="Ishii K."/>
            <person name="Walsh M.P."/>
            <person name="Cole W.C."/>
        </authorList>
    </citation>
    <scope>NUCLEOTIDE SEQUENCE [MRNA]</scope>
    <source>
        <strain>New Zealand white</strain>
        <tissue>Portal vein</tissue>
    </source>
</reference>
<reference key="3">
    <citation type="submission" date="1999-05" db="EMBL/GenBank/DDBJ databases">
        <title>Identification of a voltage-gated potassium channel (KV1.5) in rabbit pulmonary artery smooth muscle.</title>
        <authorList>
            <person name="Tate R.J."/>
            <person name="Osipenko O.N."/>
            <person name="Kempsil F.E.J."/>
            <person name="Gurney A.M."/>
        </authorList>
    </citation>
    <scope>NUCLEOTIDE SEQUENCE [MRNA]</scope>
    <source>
        <tissue>Smooth muscle</tissue>
    </source>
</reference>